<reference key="1">
    <citation type="journal article" date="1991" name="J. Exp. Med.">
        <title>Molecular cloning of gp42, a cell-surface molecule that is selectively induced on rat natural killer cells by interleukin 2: glycolipid membrane anchoring and capacity for transmembrane signaling.</title>
        <authorList>
            <person name="Seaman W.E."/>
            <person name="Niemi E.C."/>
            <person name="Stark M.R."/>
            <person name="Goldfien R.D."/>
            <person name="Pollock A.S."/>
            <person name="Imboden J.B."/>
        </authorList>
    </citation>
    <scope>NUCLEOTIDE SEQUENCE [MRNA]</scope>
</reference>
<organism>
    <name type="scientific">Rattus norvegicus</name>
    <name type="common">Rat</name>
    <dbReference type="NCBI Taxonomy" id="10116"/>
    <lineage>
        <taxon>Eukaryota</taxon>
        <taxon>Metazoa</taxon>
        <taxon>Chordata</taxon>
        <taxon>Craniata</taxon>
        <taxon>Vertebrata</taxon>
        <taxon>Euteleostomi</taxon>
        <taxon>Mammalia</taxon>
        <taxon>Eutheria</taxon>
        <taxon>Euarchontoglires</taxon>
        <taxon>Glires</taxon>
        <taxon>Rodentia</taxon>
        <taxon>Myomorpha</taxon>
        <taxon>Muroidea</taxon>
        <taxon>Muridae</taxon>
        <taxon>Murinae</taxon>
        <taxon>Rattus</taxon>
    </lineage>
</organism>
<name>GP42_RAT</name>
<proteinExistence type="evidence at transcript level"/>
<keyword id="KW-1003">Cell membrane</keyword>
<keyword id="KW-1015">Disulfide bond</keyword>
<keyword id="KW-0325">Glycoprotein</keyword>
<keyword id="KW-0336">GPI-anchor</keyword>
<keyword id="KW-0393">Immunoglobulin domain</keyword>
<keyword id="KW-0449">Lipoprotein</keyword>
<keyword id="KW-0472">Membrane</keyword>
<keyword id="KW-1185">Reference proteome</keyword>
<keyword id="KW-0677">Repeat</keyword>
<keyword id="KW-0732">Signal</keyword>
<sequence>MLLWMVLLLCVSMTEAQELFQDPVLSRLNSSETSDLLLKCTTKVDPNKPASELFYSFYKDNHIIQNRSHNPLFFISEANEENSGLYQCVVDAKDGTIQKKSDYLDIDLCTSVSQPVLTLQHEATNLAEGDKVKFLCETQLGSLPILYSFYMDGEILGEPLAPSGRAASLLISVKAEWSGKNYSCQAENKVSRDISEPKKFPLVVSGTASMKSTTVVIWLPVSCLVGWPWLLRF</sequence>
<feature type="signal peptide">
    <location>
        <begin position="1"/>
        <end position="16"/>
    </location>
</feature>
<feature type="chain" id="PRO_0000014768" description="Cell surface glycoprotein gp42">
    <location>
        <begin position="17"/>
        <end position="206"/>
    </location>
</feature>
<feature type="propeptide" id="PRO_0000014769" description="Removed in mature form" evidence="1">
    <location>
        <begin position="207"/>
        <end position="233"/>
    </location>
</feature>
<feature type="domain" description="Ig-like 1">
    <location>
        <begin position="23"/>
        <end position="98"/>
    </location>
</feature>
<feature type="domain" description="Ig-like 2">
    <location>
        <begin position="115"/>
        <end position="195"/>
    </location>
</feature>
<feature type="lipid moiety-binding region" description="GPI-anchor amidated glycine" evidence="1">
    <location>
        <position position="206"/>
    </location>
</feature>
<feature type="glycosylation site" description="N-linked (GlcNAc...) asparagine" evidence="1">
    <location>
        <position position="29"/>
    </location>
</feature>
<feature type="glycosylation site" description="N-linked (GlcNAc...) asparagine" evidence="1">
    <location>
        <position position="66"/>
    </location>
</feature>
<feature type="glycosylation site" description="N-linked (GlcNAc...) asparagine" evidence="1">
    <location>
        <position position="181"/>
    </location>
</feature>
<feature type="disulfide bond" evidence="2">
    <location>
        <begin position="40"/>
        <end position="88"/>
    </location>
</feature>
<feature type="disulfide bond" evidence="2">
    <location>
        <begin position="136"/>
        <end position="184"/>
    </location>
</feature>
<feature type="sequence variant" description="In clone 2.">
    <original>V</original>
    <variation>M</variation>
    <location>
        <position position="215"/>
    </location>
</feature>
<accession>P23505</accession>
<comment type="subcellular location">
    <subcellularLocation>
        <location>Cell membrane</location>
        <topology>Lipid-anchor</topology>
        <topology>GPI-anchor</topology>
    </subcellularLocation>
</comment>
<comment type="tissue specificity">
    <text>NK cells.</text>
</comment>
<comment type="induction">
    <text>By interleukin-2.</text>
</comment>
<protein>
    <recommendedName>
        <fullName>Cell surface glycoprotein gp42</fullName>
    </recommendedName>
</protein>
<evidence type="ECO:0000255" key="1"/>
<evidence type="ECO:0000255" key="2">
    <source>
        <dbReference type="PROSITE-ProRule" id="PRU00114"/>
    </source>
</evidence>
<dbReference type="EMBL" id="X56448">
    <property type="protein sequence ID" value="CAA39831.1"/>
    <property type="molecule type" value="mRNA"/>
</dbReference>
<dbReference type="PIR" id="JH0372">
    <property type="entry name" value="JH0372"/>
</dbReference>
<dbReference type="SMR" id="P23505"/>
<dbReference type="FunCoup" id="P23505">
    <property type="interactions" value="5"/>
</dbReference>
<dbReference type="STRING" id="10116.ENSRNOP00000000059"/>
<dbReference type="GlyGen" id="P23505">
    <property type="glycosylation" value="3 sites"/>
</dbReference>
<dbReference type="PhosphoSitePlus" id="P23505"/>
<dbReference type="PaxDb" id="10116-ENSRNOP00000000059"/>
<dbReference type="UCSC" id="RGD:1563939">
    <property type="organism name" value="rat"/>
</dbReference>
<dbReference type="AGR" id="RGD:1563939"/>
<dbReference type="RGD" id="1563939">
    <property type="gene designation" value="LOC305103"/>
</dbReference>
<dbReference type="eggNOG" id="ENOG502RU0I">
    <property type="taxonomic scope" value="Eukaryota"/>
</dbReference>
<dbReference type="InParanoid" id="P23505"/>
<dbReference type="PhylomeDB" id="P23505"/>
<dbReference type="PRO" id="PR:P23505"/>
<dbReference type="Proteomes" id="UP000002494">
    <property type="component" value="Unplaced"/>
</dbReference>
<dbReference type="GO" id="GO:0009897">
    <property type="term" value="C:external side of plasma membrane"/>
    <property type="evidence" value="ECO:0000266"/>
    <property type="project" value="RGD"/>
</dbReference>
<dbReference type="GO" id="GO:0005886">
    <property type="term" value="C:plasma membrane"/>
    <property type="evidence" value="ECO:0000266"/>
    <property type="project" value="RGD"/>
</dbReference>
<dbReference type="GO" id="GO:0042289">
    <property type="term" value="F:MHC class II protein binding"/>
    <property type="evidence" value="ECO:0000266"/>
    <property type="project" value="RGD"/>
</dbReference>
<dbReference type="GO" id="GO:0019902">
    <property type="term" value="F:phosphatase binding"/>
    <property type="evidence" value="ECO:0000266"/>
    <property type="project" value="RGD"/>
</dbReference>
<dbReference type="GO" id="GO:0019903">
    <property type="term" value="F:protein phosphatase binding"/>
    <property type="evidence" value="ECO:0000266"/>
    <property type="project" value="RGD"/>
</dbReference>
<dbReference type="GO" id="GO:0004888">
    <property type="term" value="F:transmembrane signaling receptor activity"/>
    <property type="evidence" value="ECO:0000318"/>
    <property type="project" value="GO_Central"/>
</dbReference>
<dbReference type="GO" id="GO:0007166">
    <property type="term" value="P:cell surface receptor signaling pathway"/>
    <property type="evidence" value="ECO:0000318"/>
    <property type="project" value="GO_Central"/>
</dbReference>
<dbReference type="GO" id="GO:0006955">
    <property type="term" value="P:immune response"/>
    <property type="evidence" value="ECO:0000318"/>
    <property type="project" value="GO_Central"/>
</dbReference>
<dbReference type="FunFam" id="2.60.40.10:FF:000357">
    <property type="entry name" value="Fc receptor like 1"/>
    <property type="match status" value="1"/>
</dbReference>
<dbReference type="Gene3D" id="2.60.40.10">
    <property type="entry name" value="Immunoglobulins"/>
    <property type="match status" value="2"/>
</dbReference>
<dbReference type="InterPro" id="IPR007110">
    <property type="entry name" value="Ig-like_dom"/>
</dbReference>
<dbReference type="InterPro" id="IPR036179">
    <property type="entry name" value="Ig-like_dom_sf"/>
</dbReference>
<dbReference type="InterPro" id="IPR013783">
    <property type="entry name" value="Ig-like_fold"/>
</dbReference>
<dbReference type="InterPro" id="IPR050488">
    <property type="entry name" value="Ig_Fc_receptor"/>
</dbReference>
<dbReference type="PANTHER" id="PTHR11481:SF101">
    <property type="entry name" value="FC RECEPTOR-LIKE PROTEIN 2"/>
    <property type="match status" value="1"/>
</dbReference>
<dbReference type="PANTHER" id="PTHR11481">
    <property type="entry name" value="IMMUNOGLOBULIN FC RECEPTOR"/>
    <property type="match status" value="1"/>
</dbReference>
<dbReference type="Pfam" id="PF13895">
    <property type="entry name" value="Ig_2"/>
    <property type="match status" value="2"/>
</dbReference>
<dbReference type="SUPFAM" id="SSF48726">
    <property type="entry name" value="Immunoglobulin"/>
    <property type="match status" value="2"/>
</dbReference>
<dbReference type="PROSITE" id="PS50835">
    <property type="entry name" value="IG_LIKE"/>
    <property type="match status" value="2"/>
</dbReference>